<sequence length="346" mass="36773">MSGNNPSLSYKDAGVDIDAGNALVERIKGAVKRTRRPEVMGGLGGFGALCELPTKYKHPVLVSGTDGVGTKLRLALDMKKHDTIGIDLVAMCVNDLIVQGAEPLFFLDYYATGKLDVDTAAEVISGIADGCLQAGCALIGGETAEMPGMYEGEDYDVAGFCVGVVEKEEIIDGSKVQVGDALIAVGSSGPHSNGYSLVRKILEVSKADKNERLAGKTIGEHLLAPTKIYIKSGLKLIAEHDIHAISHITGGGFWENIPRVLPEGTKAVIDGKSWEWPVIFQWLQEKGNVTTHEMYRTFNCGVGLIIALPKDQANAAVALLQAEGETAWVIGEIAAANSNEAQVEIN</sequence>
<keyword id="KW-0067">ATP-binding</keyword>
<keyword id="KW-0963">Cytoplasm</keyword>
<keyword id="KW-0436">Ligase</keyword>
<keyword id="KW-0547">Nucleotide-binding</keyword>
<keyword id="KW-0658">Purine biosynthesis</keyword>
<reference key="1">
    <citation type="journal article" date="2008" name="PLoS ONE">
        <title>A recalibrated molecular clock and independent origins for the cholera pandemic clones.</title>
        <authorList>
            <person name="Feng L."/>
            <person name="Reeves P.R."/>
            <person name="Lan R."/>
            <person name="Ren Y."/>
            <person name="Gao C."/>
            <person name="Zhou Z."/>
            <person name="Ren Y."/>
            <person name="Cheng J."/>
            <person name="Wang W."/>
            <person name="Wang J."/>
            <person name="Qian W."/>
            <person name="Li D."/>
            <person name="Wang L."/>
        </authorList>
    </citation>
    <scope>NUCLEOTIDE SEQUENCE [LARGE SCALE GENOMIC DNA]</scope>
    <source>
        <strain>M66-2</strain>
    </source>
</reference>
<accession>C3LPN0</accession>
<protein>
    <recommendedName>
        <fullName evidence="1">Phosphoribosylformylglycinamidine cyclo-ligase</fullName>
        <ecNumber evidence="1">6.3.3.1</ecNumber>
    </recommendedName>
    <alternativeName>
        <fullName evidence="1">AIR synthase</fullName>
    </alternativeName>
    <alternativeName>
        <fullName evidence="1">AIRS</fullName>
    </alternativeName>
    <alternativeName>
        <fullName evidence="1">Phosphoribosyl-aminoimidazole synthetase</fullName>
    </alternativeName>
</protein>
<evidence type="ECO:0000255" key="1">
    <source>
        <dbReference type="HAMAP-Rule" id="MF_00741"/>
    </source>
</evidence>
<feature type="chain" id="PRO_1000148307" description="Phosphoribosylformylglycinamidine cyclo-ligase">
    <location>
        <begin position="1"/>
        <end position="346"/>
    </location>
</feature>
<dbReference type="EC" id="6.3.3.1" evidence="1"/>
<dbReference type="EMBL" id="CP001233">
    <property type="protein sequence ID" value="ACP06450.1"/>
    <property type="molecule type" value="Genomic_DNA"/>
</dbReference>
<dbReference type="RefSeq" id="WP_000016423.1">
    <property type="nucleotide sequence ID" value="NC_012578.1"/>
</dbReference>
<dbReference type="SMR" id="C3LPN0"/>
<dbReference type="GeneID" id="89513785"/>
<dbReference type="KEGG" id="vcm:VCM66_2149"/>
<dbReference type="HOGENOM" id="CLU_047116_0_0_6"/>
<dbReference type="UniPathway" id="UPA00074">
    <property type="reaction ID" value="UER00129"/>
</dbReference>
<dbReference type="Proteomes" id="UP000001217">
    <property type="component" value="Chromosome I"/>
</dbReference>
<dbReference type="GO" id="GO:0005829">
    <property type="term" value="C:cytosol"/>
    <property type="evidence" value="ECO:0007669"/>
    <property type="project" value="TreeGrafter"/>
</dbReference>
<dbReference type="GO" id="GO:0005524">
    <property type="term" value="F:ATP binding"/>
    <property type="evidence" value="ECO:0007669"/>
    <property type="project" value="UniProtKB-KW"/>
</dbReference>
<dbReference type="GO" id="GO:0004637">
    <property type="term" value="F:phosphoribosylamine-glycine ligase activity"/>
    <property type="evidence" value="ECO:0007669"/>
    <property type="project" value="TreeGrafter"/>
</dbReference>
<dbReference type="GO" id="GO:0004641">
    <property type="term" value="F:phosphoribosylformylglycinamidine cyclo-ligase activity"/>
    <property type="evidence" value="ECO:0007669"/>
    <property type="project" value="UniProtKB-UniRule"/>
</dbReference>
<dbReference type="GO" id="GO:0006189">
    <property type="term" value="P:'de novo' IMP biosynthetic process"/>
    <property type="evidence" value="ECO:0007669"/>
    <property type="project" value="UniProtKB-UniRule"/>
</dbReference>
<dbReference type="GO" id="GO:0046084">
    <property type="term" value="P:adenine biosynthetic process"/>
    <property type="evidence" value="ECO:0007669"/>
    <property type="project" value="TreeGrafter"/>
</dbReference>
<dbReference type="CDD" id="cd02196">
    <property type="entry name" value="PurM"/>
    <property type="match status" value="1"/>
</dbReference>
<dbReference type="FunFam" id="3.30.1330.10:FF:000001">
    <property type="entry name" value="Phosphoribosylformylglycinamidine cyclo-ligase"/>
    <property type="match status" value="1"/>
</dbReference>
<dbReference type="FunFam" id="3.90.650.10:FF:000001">
    <property type="entry name" value="Phosphoribosylformylglycinamidine cyclo-ligase"/>
    <property type="match status" value="1"/>
</dbReference>
<dbReference type="Gene3D" id="3.90.650.10">
    <property type="entry name" value="PurM-like C-terminal domain"/>
    <property type="match status" value="1"/>
</dbReference>
<dbReference type="Gene3D" id="3.30.1330.10">
    <property type="entry name" value="PurM-like, N-terminal domain"/>
    <property type="match status" value="1"/>
</dbReference>
<dbReference type="HAMAP" id="MF_00741">
    <property type="entry name" value="AIRS"/>
    <property type="match status" value="1"/>
</dbReference>
<dbReference type="InterPro" id="IPR010918">
    <property type="entry name" value="PurM-like_C_dom"/>
</dbReference>
<dbReference type="InterPro" id="IPR036676">
    <property type="entry name" value="PurM-like_C_sf"/>
</dbReference>
<dbReference type="InterPro" id="IPR016188">
    <property type="entry name" value="PurM-like_N"/>
</dbReference>
<dbReference type="InterPro" id="IPR036921">
    <property type="entry name" value="PurM-like_N_sf"/>
</dbReference>
<dbReference type="InterPro" id="IPR004733">
    <property type="entry name" value="PurM_cligase"/>
</dbReference>
<dbReference type="NCBIfam" id="TIGR00878">
    <property type="entry name" value="purM"/>
    <property type="match status" value="1"/>
</dbReference>
<dbReference type="PANTHER" id="PTHR10520:SF12">
    <property type="entry name" value="TRIFUNCTIONAL PURINE BIOSYNTHETIC PROTEIN ADENOSINE-3"/>
    <property type="match status" value="1"/>
</dbReference>
<dbReference type="PANTHER" id="PTHR10520">
    <property type="entry name" value="TRIFUNCTIONAL PURINE BIOSYNTHETIC PROTEIN ADENOSINE-3-RELATED"/>
    <property type="match status" value="1"/>
</dbReference>
<dbReference type="Pfam" id="PF00586">
    <property type="entry name" value="AIRS"/>
    <property type="match status" value="1"/>
</dbReference>
<dbReference type="Pfam" id="PF02769">
    <property type="entry name" value="AIRS_C"/>
    <property type="match status" value="1"/>
</dbReference>
<dbReference type="SUPFAM" id="SSF56042">
    <property type="entry name" value="PurM C-terminal domain-like"/>
    <property type="match status" value="1"/>
</dbReference>
<dbReference type="SUPFAM" id="SSF55326">
    <property type="entry name" value="PurM N-terminal domain-like"/>
    <property type="match status" value="1"/>
</dbReference>
<name>PUR5_VIBCM</name>
<organism>
    <name type="scientific">Vibrio cholerae serotype O1 (strain M66-2)</name>
    <dbReference type="NCBI Taxonomy" id="579112"/>
    <lineage>
        <taxon>Bacteria</taxon>
        <taxon>Pseudomonadati</taxon>
        <taxon>Pseudomonadota</taxon>
        <taxon>Gammaproteobacteria</taxon>
        <taxon>Vibrionales</taxon>
        <taxon>Vibrionaceae</taxon>
        <taxon>Vibrio</taxon>
    </lineage>
</organism>
<proteinExistence type="inferred from homology"/>
<comment type="catalytic activity">
    <reaction evidence="1">
        <text>2-formamido-N(1)-(5-O-phospho-beta-D-ribosyl)acetamidine + ATP = 5-amino-1-(5-phospho-beta-D-ribosyl)imidazole + ADP + phosphate + H(+)</text>
        <dbReference type="Rhea" id="RHEA:23032"/>
        <dbReference type="ChEBI" id="CHEBI:15378"/>
        <dbReference type="ChEBI" id="CHEBI:30616"/>
        <dbReference type="ChEBI" id="CHEBI:43474"/>
        <dbReference type="ChEBI" id="CHEBI:137981"/>
        <dbReference type="ChEBI" id="CHEBI:147287"/>
        <dbReference type="ChEBI" id="CHEBI:456216"/>
        <dbReference type="EC" id="6.3.3.1"/>
    </reaction>
</comment>
<comment type="pathway">
    <text evidence="1">Purine metabolism; IMP biosynthesis via de novo pathway; 5-amino-1-(5-phospho-D-ribosyl)imidazole from N(2)-formyl-N(1)-(5-phospho-D-ribosyl)glycinamide: step 2/2.</text>
</comment>
<comment type="subcellular location">
    <subcellularLocation>
        <location evidence="1">Cytoplasm</location>
    </subcellularLocation>
</comment>
<comment type="similarity">
    <text evidence="1">Belongs to the AIR synthase family.</text>
</comment>
<gene>
    <name evidence="1" type="primary">purM</name>
    <name type="ordered locus">VCM66_2149</name>
</gene>